<name>RER1_MOUSE</name>
<feature type="initiator methionine" description="Removed" evidence="2">
    <location>
        <position position="1"/>
    </location>
</feature>
<feature type="chain" id="PRO_0000207590" description="Protein RER1">
    <location>
        <begin position="2"/>
        <end position="196"/>
    </location>
</feature>
<feature type="transmembrane region" description="Helical" evidence="3">
    <location>
        <begin position="41"/>
        <end position="61"/>
    </location>
</feature>
<feature type="transmembrane region" description="Helical" evidence="3">
    <location>
        <begin position="63"/>
        <end position="83"/>
    </location>
</feature>
<feature type="transmembrane region" description="Helical" evidence="3">
    <location>
        <begin position="140"/>
        <end position="160"/>
    </location>
</feature>
<feature type="modified residue" description="N-acetylserine" evidence="2">
    <location>
        <position position="2"/>
    </location>
</feature>
<feature type="modified residue" description="Phosphoserine" evidence="2">
    <location>
        <position position="2"/>
    </location>
</feature>
<feature type="modified residue" description="Phosphoserine" evidence="2">
    <location>
        <position position="6"/>
    </location>
</feature>
<feature type="modified residue" description="Phosphoserine" evidence="2">
    <location>
        <position position="10"/>
    </location>
</feature>
<feature type="modified residue" description="Phosphoserine" evidence="5 6">
    <location>
        <position position="95"/>
    </location>
</feature>
<gene>
    <name type="primary">Rer1</name>
</gene>
<keyword id="KW-0007">Acetylation</keyword>
<keyword id="KW-0333">Golgi apparatus</keyword>
<keyword id="KW-0472">Membrane</keyword>
<keyword id="KW-0597">Phosphoprotein</keyword>
<keyword id="KW-1185">Reference proteome</keyword>
<keyword id="KW-0812">Transmembrane</keyword>
<keyword id="KW-1133">Transmembrane helix</keyword>
<reference key="1">
    <citation type="journal article" date="2005" name="Science">
        <title>The transcriptional landscape of the mammalian genome.</title>
        <authorList>
            <person name="Carninci P."/>
            <person name="Kasukawa T."/>
            <person name="Katayama S."/>
            <person name="Gough J."/>
            <person name="Frith M.C."/>
            <person name="Maeda N."/>
            <person name="Oyama R."/>
            <person name="Ravasi T."/>
            <person name="Lenhard B."/>
            <person name="Wells C."/>
            <person name="Kodzius R."/>
            <person name="Shimokawa K."/>
            <person name="Bajic V.B."/>
            <person name="Brenner S.E."/>
            <person name="Batalov S."/>
            <person name="Forrest A.R."/>
            <person name="Zavolan M."/>
            <person name="Davis M.J."/>
            <person name="Wilming L.G."/>
            <person name="Aidinis V."/>
            <person name="Allen J.E."/>
            <person name="Ambesi-Impiombato A."/>
            <person name="Apweiler R."/>
            <person name="Aturaliya R.N."/>
            <person name="Bailey T.L."/>
            <person name="Bansal M."/>
            <person name="Baxter L."/>
            <person name="Beisel K.W."/>
            <person name="Bersano T."/>
            <person name="Bono H."/>
            <person name="Chalk A.M."/>
            <person name="Chiu K.P."/>
            <person name="Choudhary V."/>
            <person name="Christoffels A."/>
            <person name="Clutterbuck D.R."/>
            <person name="Crowe M.L."/>
            <person name="Dalla E."/>
            <person name="Dalrymple B.P."/>
            <person name="de Bono B."/>
            <person name="Della Gatta G."/>
            <person name="di Bernardo D."/>
            <person name="Down T."/>
            <person name="Engstrom P."/>
            <person name="Fagiolini M."/>
            <person name="Faulkner G."/>
            <person name="Fletcher C.F."/>
            <person name="Fukushima T."/>
            <person name="Furuno M."/>
            <person name="Futaki S."/>
            <person name="Gariboldi M."/>
            <person name="Georgii-Hemming P."/>
            <person name="Gingeras T.R."/>
            <person name="Gojobori T."/>
            <person name="Green R.E."/>
            <person name="Gustincich S."/>
            <person name="Harbers M."/>
            <person name="Hayashi Y."/>
            <person name="Hensch T.K."/>
            <person name="Hirokawa N."/>
            <person name="Hill D."/>
            <person name="Huminiecki L."/>
            <person name="Iacono M."/>
            <person name="Ikeo K."/>
            <person name="Iwama A."/>
            <person name="Ishikawa T."/>
            <person name="Jakt M."/>
            <person name="Kanapin A."/>
            <person name="Katoh M."/>
            <person name="Kawasawa Y."/>
            <person name="Kelso J."/>
            <person name="Kitamura H."/>
            <person name="Kitano H."/>
            <person name="Kollias G."/>
            <person name="Krishnan S.P."/>
            <person name="Kruger A."/>
            <person name="Kummerfeld S.K."/>
            <person name="Kurochkin I.V."/>
            <person name="Lareau L.F."/>
            <person name="Lazarevic D."/>
            <person name="Lipovich L."/>
            <person name="Liu J."/>
            <person name="Liuni S."/>
            <person name="McWilliam S."/>
            <person name="Madan Babu M."/>
            <person name="Madera M."/>
            <person name="Marchionni L."/>
            <person name="Matsuda H."/>
            <person name="Matsuzawa S."/>
            <person name="Miki H."/>
            <person name="Mignone F."/>
            <person name="Miyake S."/>
            <person name="Morris K."/>
            <person name="Mottagui-Tabar S."/>
            <person name="Mulder N."/>
            <person name="Nakano N."/>
            <person name="Nakauchi H."/>
            <person name="Ng P."/>
            <person name="Nilsson R."/>
            <person name="Nishiguchi S."/>
            <person name="Nishikawa S."/>
            <person name="Nori F."/>
            <person name="Ohara O."/>
            <person name="Okazaki Y."/>
            <person name="Orlando V."/>
            <person name="Pang K.C."/>
            <person name="Pavan W.J."/>
            <person name="Pavesi G."/>
            <person name="Pesole G."/>
            <person name="Petrovsky N."/>
            <person name="Piazza S."/>
            <person name="Reed J."/>
            <person name="Reid J.F."/>
            <person name="Ring B.Z."/>
            <person name="Ringwald M."/>
            <person name="Rost B."/>
            <person name="Ruan Y."/>
            <person name="Salzberg S.L."/>
            <person name="Sandelin A."/>
            <person name="Schneider C."/>
            <person name="Schoenbach C."/>
            <person name="Sekiguchi K."/>
            <person name="Semple C.A."/>
            <person name="Seno S."/>
            <person name="Sessa L."/>
            <person name="Sheng Y."/>
            <person name="Shibata Y."/>
            <person name="Shimada H."/>
            <person name="Shimada K."/>
            <person name="Silva D."/>
            <person name="Sinclair B."/>
            <person name="Sperling S."/>
            <person name="Stupka E."/>
            <person name="Sugiura K."/>
            <person name="Sultana R."/>
            <person name="Takenaka Y."/>
            <person name="Taki K."/>
            <person name="Tammoja K."/>
            <person name="Tan S.L."/>
            <person name="Tang S."/>
            <person name="Taylor M.S."/>
            <person name="Tegner J."/>
            <person name="Teichmann S.A."/>
            <person name="Ueda H.R."/>
            <person name="van Nimwegen E."/>
            <person name="Verardo R."/>
            <person name="Wei C.L."/>
            <person name="Yagi K."/>
            <person name="Yamanishi H."/>
            <person name="Zabarovsky E."/>
            <person name="Zhu S."/>
            <person name="Zimmer A."/>
            <person name="Hide W."/>
            <person name="Bult C."/>
            <person name="Grimmond S.M."/>
            <person name="Teasdale R.D."/>
            <person name="Liu E.T."/>
            <person name="Brusic V."/>
            <person name="Quackenbush J."/>
            <person name="Wahlestedt C."/>
            <person name="Mattick J.S."/>
            <person name="Hume D.A."/>
            <person name="Kai C."/>
            <person name="Sasaki D."/>
            <person name="Tomaru Y."/>
            <person name="Fukuda S."/>
            <person name="Kanamori-Katayama M."/>
            <person name="Suzuki M."/>
            <person name="Aoki J."/>
            <person name="Arakawa T."/>
            <person name="Iida J."/>
            <person name="Imamura K."/>
            <person name="Itoh M."/>
            <person name="Kato T."/>
            <person name="Kawaji H."/>
            <person name="Kawagashira N."/>
            <person name="Kawashima T."/>
            <person name="Kojima M."/>
            <person name="Kondo S."/>
            <person name="Konno H."/>
            <person name="Nakano K."/>
            <person name="Ninomiya N."/>
            <person name="Nishio T."/>
            <person name="Okada M."/>
            <person name="Plessy C."/>
            <person name="Shibata K."/>
            <person name="Shiraki T."/>
            <person name="Suzuki S."/>
            <person name="Tagami M."/>
            <person name="Waki K."/>
            <person name="Watahiki A."/>
            <person name="Okamura-Oho Y."/>
            <person name="Suzuki H."/>
            <person name="Kawai J."/>
            <person name="Hayashizaki Y."/>
        </authorList>
    </citation>
    <scope>NUCLEOTIDE SEQUENCE [LARGE SCALE MRNA]</scope>
    <source>
        <strain>BALB/cJ</strain>
        <strain>C57BL/6J</strain>
        <tissue>Kidney</tissue>
        <tissue>Wolffian duct</tissue>
    </source>
</reference>
<reference key="2">
    <citation type="journal article" date="2004" name="Genome Res.">
        <title>The status, quality, and expansion of the NIH full-length cDNA project: the Mammalian Gene Collection (MGC).</title>
        <authorList>
            <consortium name="The MGC Project Team"/>
        </authorList>
    </citation>
    <scope>NUCLEOTIDE SEQUENCE [LARGE SCALE MRNA]</scope>
    <source>
        <strain>FVB/N</strain>
        <tissue>Mammary tumor</tissue>
    </source>
</reference>
<reference key="3">
    <citation type="journal article" date="2007" name="Proc. Natl. Acad. Sci. U.S.A.">
        <title>Large-scale phosphorylation analysis of mouse liver.</title>
        <authorList>
            <person name="Villen J."/>
            <person name="Beausoleil S.A."/>
            <person name="Gerber S.A."/>
            <person name="Gygi S.P."/>
        </authorList>
    </citation>
    <scope>PHOSPHORYLATION [LARGE SCALE ANALYSIS] AT SER-95</scope>
    <scope>IDENTIFICATION BY MASS SPECTROMETRY [LARGE SCALE ANALYSIS]</scope>
    <source>
        <tissue>Liver</tissue>
    </source>
</reference>
<reference key="4">
    <citation type="journal article" date="2010" name="Cell">
        <title>A tissue-specific atlas of mouse protein phosphorylation and expression.</title>
        <authorList>
            <person name="Huttlin E.L."/>
            <person name="Jedrychowski M.P."/>
            <person name="Elias J.E."/>
            <person name="Goswami T."/>
            <person name="Rad R."/>
            <person name="Beausoleil S.A."/>
            <person name="Villen J."/>
            <person name="Haas W."/>
            <person name="Sowa M.E."/>
            <person name="Gygi S.P."/>
        </authorList>
    </citation>
    <scope>PHOSPHORYLATION [LARGE SCALE ANALYSIS] AT SER-95</scope>
    <scope>IDENTIFICATION BY MASS SPECTROMETRY [LARGE SCALE ANALYSIS]</scope>
    <source>
        <tissue>Brain</tissue>
        <tissue>Brown adipose tissue</tissue>
        <tissue>Heart</tissue>
        <tissue>Kidney</tissue>
        <tissue>Liver</tissue>
        <tissue>Lung</tissue>
        <tissue>Pancreas</tissue>
        <tissue>Spleen</tissue>
        <tissue>Testis</tissue>
    </source>
</reference>
<dbReference type="EMBL" id="AK002550">
    <property type="protein sequence ID" value="BAB22181.1"/>
    <property type="molecule type" value="mRNA"/>
</dbReference>
<dbReference type="EMBL" id="AK003682">
    <property type="protein sequence ID" value="BAB22935.1"/>
    <property type="molecule type" value="mRNA"/>
</dbReference>
<dbReference type="EMBL" id="AK013262">
    <property type="protein sequence ID" value="BAB28755.1"/>
    <property type="molecule type" value="mRNA"/>
</dbReference>
<dbReference type="EMBL" id="AK078396">
    <property type="protein sequence ID" value="BAC37253.1"/>
    <property type="molecule type" value="mRNA"/>
</dbReference>
<dbReference type="EMBL" id="AK168192">
    <property type="protein sequence ID" value="BAE40152.1"/>
    <property type="molecule type" value="mRNA"/>
</dbReference>
<dbReference type="EMBL" id="BC029189">
    <property type="protein sequence ID" value="AAH29189.1"/>
    <property type="molecule type" value="mRNA"/>
</dbReference>
<dbReference type="CCDS" id="CCDS19022.1"/>
<dbReference type="RefSeq" id="NP_001349910.1">
    <property type="nucleotide sequence ID" value="NM_001362981.1"/>
</dbReference>
<dbReference type="RefSeq" id="NP_080671.1">
    <property type="nucleotide sequence ID" value="NM_026395.2"/>
</dbReference>
<dbReference type="RefSeq" id="XP_006539193.1">
    <property type="nucleotide sequence ID" value="XM_006539130.2"/>
</dbReference>
<dbReference type="RefSeq" id="XP_006539194.1">
    <property type="nucleotide sequence ID" value="XM_006539131.4"/>
</dbReference>
<dbReference type="RefSeq" id="XP_006539195.1">
    <property type="nucleotide sequence ID" value="XM_006539132.4"/>
</dbReference>
<dbReference type="RefSeq" id="XP_006539196.1">
    <property type="nucleotide sequence ID" value="XM_006539133.4"/>
</dbReference>
<dbReference type="RefSeq" id="XP_011248630.1">
    <property type="nucleotide sequence ID" value="XM_011250328.4"/>
</dbReference>
<dbReference type="RefSeq" id="XP_030109590.1">
    <property type="nucleotide sequence ID" value="XM_030253730.1"/>
</dbReference>
<dbReference type="BioGRID" id="212464">
    <property type="interactions" value="11"/>
</dbReference>
<dbReference type="DIP" id="DIP-59593N"/>
<dbReference type="FunCoup" id="Q9CQU3">
    <property type="interactions" value="3266"/>
</dbReference>
<dbReference type="IntAct" id="Q9CQU3">
    <property type="interactions" value="1"/>
</dbReference>
<dbReference type="STRING" id="10090.ENSMUSP00000030914"/>
<dbReference type="GlyGen" id="Q9CQU3">
    <property type="glycosylation" value="1 site, 1 O-linked glycan (1 site)"/>
</dbReference>
<dbReference type="iPTMnet" id="Q9CQU3"/>
<dbReference type="PhosphoSitePlus" id="Q9CQU3"/>
<dbReference type="SwissPalm" id="Q9CQU3"/>
<dbReference type="jPOST" id="Q9CQU3"/>
<dbReference type="PaxDb" id="10090-ENSMUSP00000030914"/>
<dbReference type="PeptideAtlas" id="Q9CQU3"/>
<dbReference type="ProteomicsDB" id="255227"/>
<dbReference type="Pumba" id="Q9CQU3"/>
<dbReference type="Antibodypedia" id="26719">
    <property type="antibodies" value="90 antibodies from 26 providers"/>
</dbReference>
<dbReference type="DNASU" id="67830"/>
<dbReference type="Ensembl" id="ENSMUST00000030914.4">
    <property type="protein sequence ID" value="ENSMUSP00000030914.4"/>
    <property type="gene ID" value="ENSMUSG00000029048.4"/>
</dbReference>
<dbReference type="GeneID" id="67830"/>
<dbReference type="KEGG" id="mmu:67830"/>
<dbReference type="UCSC" id="uc008wct.1">
    <property type="organism name" value="mouse"/>
</dbReference>
<dbReference type="AGR" id="MGI:1915080"/>
<dbReference type="CTD" id="11079"/>
<dbReference type="MGI" id="MGI:1915080">
    <property type="gene designation" value="Rer1"/>
</dbReference>
<dbReference type="VEuPathDB" id="HostDB:ENSMUSG00000029048"/>
<dbReference type="eggNOG" id="KOG1688">
    <property type="taxonomic scope" value="Eukaryota"/>
</dbReference>
<dbReference type="GeneTree" id="ENSGT00510000047137"/>
<dbReference type="HOGENOM" id="CLU_074889_1_0_1"/>
<dbReference type="InParanoid" id="Q9CQU3"/>
<dbReference type="OMA" id="GWYVVCY"/>
<dbReference type="OrthoDB" id="448250at2759"/>
<dbReference type="PhylomeDB" id="Q9CQU3"/>
<dbReference type="TreeFam" id="TF300029"/>
<dbReference type="BioGRID-ORCS" id="67830">
    <property type="hits" value="16 hits in 83 CRISPR screens"/>
</dbReference>
<dbReference type="ChiTaRS" id="Rer1">
    <property type="organism name" value="mouse"/>
</dbReference>
<dbReference type="PRO" id="PR:Q9CQU3"/>
<dbReference type="Proteomes" id="UP000000589">
    <property type="component" value="Chromosome 4"/>
</dbReference>
<dbReference type="RNAct" id="Q9CQU3">
    <property type="molecule type" value="protein"/>
</dbReference>
<dbReference type="Bgee" id="ENSMUSG00000029048">
    <property type="expression patterns" value="Expressed in ileal epithelium and 263 other cell types or tissues"/>
</dbReference>
<dbReference type="GO" id="GO:0009986">
    <property type="term" value="C:cell surface"/>
    <property type="evidence" value="ECO:0000314"/>
    <property type="project" value="MGI"/>
</dbReference>
<dbReference type="GO" id="GO:0005793">
    <property type="term" value="C:endoplasmic reticulum-Golgi intermediate compartment"/>
    <property type="evidence" value="ECO:0000314"/>
    <property type="project" value="MGI"/>
</dbReference>
<dbReference type="GO" id="GO:0000139">
    <property type="term" value="C:Golgi membrane"/>
    <property type="evidence" value="ECO:0007669"/>
    <property type="project" value="UniProtKB-SubCell"/>
</dbReference>
<dbReference type="GO" id="GO:0005886">
    <property type="term" value="C:plasma membrane"/>
    <property type="evidence" value="ECO:0007669"/>
    <property type="project" value="GOC"/>
</dbReference>
<dbReference type="GO" id="GO:0033130">
    <property type="term" value="F:acetylcholine receptor binding"/>
    <property type="evidence" value="ECO:0000353"/>
    <property type="project" value="MGI"/>
</dbReference>
<dbReference type="GO" id="GO:0007528">
    <property type="term" value="P:neuromuscular junction development"/>
    <property type="evidence" value="ECO:0000315"/>
    <property type="project" value="MGI"/>
</dbReference>
<dbReference type="GO" id="GO:1903078">
    <property type="term" value="P:positive regulation of protein localization to plasma membrane"/>
    <property type="evidence" value="ECO:0000315"/>
    <property type="project" value="MGI"/>
</dbReference>
<dbReference type="GO" id="GO:0006890">
    <property type="term" value="P:retrograde vesicle-mediated transport, Golgi to endoplasmic reticulum"/>
    <property type="evidence" value="ECO:0007669"/>
    <property type="project" value="Ensembl"/>
</dbReference>
<dbReference type="GO" id="GO:0071340">
    <property type="term" value="P:skeletal muscle acetylcholine-gated channel clustering"/>
    <property type="evidence" value="ECO:0000315"/>
    <property type="project" value="MGI"/>
</dbReference>
<dbReference type="InterPro" id="IPR004932">
    <property type="entry name" value="Rer1"/>
</dbReference>
<dbReference type="PANTHER" id="PTHR10743">
    <property type="entry name" value="PROTEIN RER1"/>
    <property type="match status" value="1"/>
</dbReference>
<dbReference type="PANTHER" id="PTHR10743:SF0">
    <property type="entry name" value="PROTEIN RER1"/>
    <property type="match status" value="1"/>
</dbReference>
<dbReference type="Pfam" id="PF03248">
    <property type="entry name" value="Rer1"/>
    <property type="match status" value="1"/>
</dbReference>
<dbReference type="PIRSF" id="PIRSF016013">
    <property type="entry name" value="AtER_Rer1p"/>
    <property type="match status" value="1"/>
</dbReference>
<evidence type="ECO:0000250" key="1"/>
<evidence type="ECO:0000250" key="2">
    <source>
        <dbReference type="UniProtKB" id="O15258"/>
    </source>
</evidence>
<evidence type="ECO:0000255" key="3"/>
<evidence type="ECO:0000305" key="4"/>
<evidence type="ECO:0007744" key="5">
    <source>
    </source>
</evidence>
<evidence type="ECO:0007744" key="6">
    <source>
    </source>
</evidence>
<accession>Q9CQU3</accession>
<accession>Q3THP4</accession>
<proteinExistence type="evidence at protein level"/>
<comment type="function">
    <text evidence="1">Involved in the retrieval of endoplasmic reticulum membrane proteins from the early Golgi compartment.</text>
</comment>
<comment type="subcellular location">
    <subcellularLocation>
        <location evidence="1">Golgi apparatus membrane</location>
        <topology evidence="1">Multi-pass membrane protein</topology>
    </subcellularLocation>
</comment>
<comment type="similarity">
    <text evidence="4">Belongs to the RER1 family.</text>
</comment>
<sequence>MSEGDSVGDSVHGKPSVVYRFFSRLGQIYQSWLDKSTPYTAVRWVVTLGLSFVYMIRVYLLQGWYIVTYALGIYHLNLFIAFLSPKVDPSLMEDSDDGPSLPTKQNEEFRPFIRRLPEFKFWHAATKGILVAMICTFFEAFNVPVFWPILVMYFIMLFCITMKRQIKHMIKYRYIPFTHGKRRYKGKEDVGKTFAS</sequence>
<organism>
    <name type="scientific">Mus musculus</name>
    <name type="common">Mouse</name>
    <dbReference type="NCBI Taxonomy" id="10090"/>
    <lineage>
        <taxon>Eukaryota</taxon>
        <taxon>Metazoa</taxon>
        <taxon>Chordata</taxon>
        <taxon>Craniata</taxon>
        <taxon>Vertebrata</taxon>
        <taxon>Euteleostomi</taxon>
        <taxon>Mammalia</taxon>
        <taxon>Eutheria</taxon>
        <taxon>Euarchontoglires</taxon>
        <taxon>Glires</taxon>
        <taxon>Rodentia</taxon>
        <taxon>Myomorpha</taxon>
        <taxon>Muroidea</taxon>
        <taxon>Muridae</taxon>
        <taxon>Murinae</taxon>
        <taxon>Mus</taxon>
        <taxon>Mus</taxon>
    </lineage>
</organism>
<protein>
    <recommendedName>
        <fullName>Protein RER1</fullName>
    </recommendedName>
</protein>